<keyword id="KW-0067">ATP-binding</keyword>
<keyword id="KW-0414">Isoprene biosynthesis</keyword>
<keyword id="KW-0418">Kinase</keyword>
<keyword id="KW-0547">Nucleotide-binding</keyword>
<keyword id="KW-1185">Reference proteome</keyword>
<keyword id="KW-0808">Transferase</keyword>
<name>ISPE_FUSNN</name>
<evidence type="ECO:0000255" key="1">
    <source>
        <dbReference type="HAMAP-Rule" id="MF_00061"/>
    </source>
</evidence>
<proteinExistence type="inferred from homology"/>
<gene>
    <name evidence="1" type="primary">ispE</name>
    <name type="ordered locus">FN0021</name>
</gene>
<comment type="function">
    <text evidence="1">Catalyzes the phosphorylation of the position 2 hydroxy group of 4-diphosphocytidyl-2C-methyl-D-erythritol.</text>
</comment>
<comment type="catalytic activity">
    <reaction evidence="1">
        <text>4-CDP-2-C-methyl-D-erythritol + ATP = 4-CDP-2-C-methyl-D-erythritol 2-phosphate + ADP + H(+)</text>
        <dbReference type="Rhea" id="RHEA:18437"/>
        <dbReference type="ChEBI" id="CHEBI:15378"/>
        <dbReference type="ChEBI" id="CHEBI:30616"/>
        <dbReference type="ChEBI" id="CHEBI:57823"/>
        <dbReference type="ChEBI" id="CHEBI:57919"/>
        <dbReference type="ChEBI" id="CHEBI:456216"/>
        <dbReference type="EC" id="2.7.1.148"/>
    </reaction>
</comment>
<comment type="pathway">
    <text evidence="1">Isoprenoid biosynthesis; isopentenyl diphosphate biosynthesis via DXP pathway; isopentenyl diphosphate from 1-deoxy-D-xylulose 5-phosphate: step 3/6.</text>
</comment>
<comment type="similarity">
    <text evidence="1">Belongs to the GHMP kinase family. IspE subfamily.</text>
</comment>
<feature type="chain" id="PRO_0000189219" description="4-diphosphocytidyl-2-C-methyl-D-erythritol kinase">
    <location>
        <begin position="1"/>
        <end position="294"/>
    </location>
</feature>
<feature type="active site" evidence="1">
    <location>
        <position position="15"/>
    </location>
</feature>
<feature type="active site" evidence="1">
    <location>
        <position position="143"/>
    </location>
</feature>
<feature type="binding site" evidence="1">
    <location>
        <begin position="101"/>
        <end position="111"/>
    </location>
    <ligand>
        <name>ATP</name>
        <dbReference type="ChEBI" id="CHEBI:30616"/>
    </ligand>
</feature>
<sequence>MRISLNKYKIFSNAKINIGLNVFQKESDGYHNIDSIMAPIDLSDEMDVTFYSDLGDLKIECSDKSIPTDERNILYKTYKIFFEESKKEKEKIDIILKKNIPSEAGLGGGSSNAGFFLKLLNKHYGNVYNEKELEKLAMRVGSDVPFFIKNKTARVGGKGNRVDLVENNLKDSIILIKPLDFGVSTKEAYESFDNLKEVKYADFDKIIKNLKEGNRIALESNIENSLEQGILETDTNIKMLKMTLNSVVSGKKFFMSGSGSTYYTFVTELEKSQIETRLKTFVDNVKIIICKTIN</sequence>
<accession>Q8R6C8</accession>
<protein>
    <recommendedName>
        <fullName evidence="1">4-diphosphocytidyl-2-C-methyl-D-erythritol kinase</fullName>
        <shortName evidence="1">CMK</shortName>
        <ecNumber evidence="1">2.7.1.148</ecNumber>
    </recommendedName>
    <alternativeName>
        <fullName evidence="1">4-(cytidine-5'-diphospho)-2-C-methyl-D-erythritol kinase</fullName>
    </alternativeName>
</protein>
<reference key="1">
    <citation type="journal article" date="2002" name="J. Bacteriol.">
        <title>Genome sequence and analysis of the oral bacterium Fusobacterium nucleatum strain ATCC 25586.</title>
        <authorList>
            <person name="Kapatral V."/>
            <person name="Anderson I."/>
            <person name="Ivanova N."/>
            <person name="Reznik G."/>
            <person name="Los T."/>
            <person name="Lykidis A."/>
            <person name="Bhattacharyya A."/>
            <person name="Bartman A."/>
            <person name="Gardner W."/>
            <person name="Grechkin G."/>
            <person name="Zhu L."/>
            <person name="Vasieva O."/>
            <person name="Chu L."/>
            <person name="Kogan Y."/>
            <person name="Chaga O."/>
            <person name="Goltsman E."/>
            <person name="Bernal A."/>
            <person name="Larsen N."/>
            <person name="D'Souza M."/>
            <person name="Walunas T."/>
            <person name="Pusch G."/>
            <person name="Haselkorn R."/>
            <person name="Fonstein M."/>
            <person name="Kyrpides N.C."/>
            <person name="Overbeek R."/>
        </authorList>
    </citation>
    <scope>NUCLEOTIDE SEQUENCE [LARGE SCALE GENOMIC DNA]</scope>
    <source>
        <strain>ATCC 25586 / DSM 15643 / BCRC 10681 / CIP 101130 / JCM 8532 / KCTC 2640 / LMG 13131 / VPI 4355</strain>
    </source>
</reference>
<organism>
    <name type="scientific">Fusobacterium nucleatum subsp. nucleatum (strain ATCC 25586 / DSM 15643 / BCRC 10681 / CIP 101130 / JCM 8532 / KCTC 2640 / LMG 13131 / VPI 4355)</name>
    <dbReference type="NCBI Taxonomy" id="190304"/>
    <lineage>
        <taxon>Bacteria</taxon>
        <taxon>Fusobacteriati</taxon>
        <taxon>Fusobacteriota</taxon>
        <taxon>Fusobacteriia</taxon>
        <taxon>Fusobacteriales</taxon>
        <taxon>Fusobacteriaceae</taxon>
        <taxon>Fusobacterium</taxon>
    </lineage>
</organism>
<dbReference type="EC" id="2.7.1.148" evidence="1"/>
<dbReference type="EMBL" id="AE009951">
    <property type="protein sequence ID" value="AAL94234.1"/>
    <property type="molecule type" value="Genomic_DNA"/>
</dbReference>
<dbReference type="RefSeq" id="NP_602935.1">
    <property type="nucleotide sequence ID" value="NC_003454.1"/>
</dbReference>
<dbReference type="RefSeq" id="WP_011016081.1">
    <property type="nucleotide sequence ID" value="NZ_OZ209243.1"/>
</dbReference>
<dbReference type="SMR" id="Q8R6C8"/>
<dbReference type="FunCoup" id="Q8R6C8">
    <property type="interactions" value="359"/>
</dbReference>
<dbReference type="STRING" id="190304.FN0021"/>
<dbReference type="PaxDb" id="190304-FN0021"/>
<dbReference type="EnsemblBacteria" id="AAL94234">
    <property type="protein sequence ID" value="AAL94234"/>
    <property type="gene ID" value="FN0021"/>
</dbReference>
<dbReference type="GeneID" id="79782847"/>
<dbReference type="KEGG" id="fnu:FN0021"/>
<dbReference type="PATRIC" id="fig|190304.8.peg.614"/>
<dbReference type="eggNOG" id="COG1947">
    <property type="taxonomic scope" value="Bacteria"/>
</dbReference>
<dbReference type="HOGENOM" id="CLU_053057_2_0_0"/>
<dbReference type="InParanoid" id="Q8R6C8"/>
<dbReference type="BioCyc" id="FNUC190304:G1FZS-634-MONOMER"/>
<dbReference type="UniPathway" id="UPA00056">
    <property type="reaction ID" value="UER00094"/>
</dbReference>
<dbReference type="Proteomes" id="UP000002521">
    <property type="component" value="Chromosome"/>
</dbReference>
<dbReference type="GO" id="GO:0050515">
    <property type="term" value="F:4-(cytidine 5'-diphospho)-2-C-methyl-D-erythritol kinase activity"/>
    <property type="evidence" value="ECO:0000318"/>
    <property type="project" value="GO_Central"/>
</dbReference>
<dbReference type="GO" id="GO:0005524">
    <property type="term" value="F:ATP binding"/>
    <property type="evidence" value="ECO:0007669"/>
    <property type="project" value="UniProtKB-UniRule"/>
</dbReference>
<dbReference type="GO" id="GO:0019288">
    <property type="term" value="P:isopentenyl diphosphate biosynthetic process, methylerythritol 4-phosphate pathway"/>
    <property type="evidence" value="ECO:0007669"/>
    <property type="project" value="UniProtKB-UniRule"/>
</dbReference>
<dbReference type="GO" id="GO:0016114">
    <property type="term" value="P:terpenoid biosynthetic process"/>
    <property type="evidence" value="ECO:0007669"/>
    <property type="project" value="InterPro"/>
</dbReference>
<dbReference type="Gene3D" id="3.30.230.10">
    <property type="match status" value="1"/>
</dbReference>
<dbReference type="Gene3D" id="3.30.70.890">
    <property type="entry name" value="GHMP kinase, C-terminal domain"/>
    <property type="match status" value="1"/>
</dbReference>
<dbReference type="HAMAP" id="MF_00061">
    <property type="entry name" value="IspE"/>
    <property type="match status" value="1"/>
</dbReference>
<dbReference type="InterPro" id="IPR036554">
    <property type="entry name" value="GHMP_kinase_C_sf"/>
</dbReference>
<dbReference type="InterPro" id="IPR006204">
    <property type="entry name" value="GHMP_kinase_N_dom"/>
</dbReference>
<dbReference type="InterPro" id="IPR004424">
    <property type="entry name" value="IspE"/>
</dbReference>
<dbReference type="InterPro" id="IPR020568">
    <property type="entry name" value="Ribosomal_Su5_D2-typ_SF"/>
</dbReference>
<dbReference type="InterPro" id="IPR014721">
    <property type="entry name" value="Ribsml_uS5_D2-typ_fold_subgr"/>
</dbReference>
<dbReference type="NCBIfam" id="TIGR00154">
    <property type="entry name" value="ispE"/>
    <property type="match status" value="1"/>
</dbReference>
<dbReference type="PANTHER" id="PTHR43527">
    <property type="entry name" value="4-DIPHOSPHOCYTIDYL-2-C-METHYL-D-ERYTHRITOL KINASE, CHLOROPLASTIC"/>
    <property type="match status" value="1"/>
</dbReference>
<dbReference type="PANTHER" id="PTHR43527:SF2">
    <property type="entry name" value="4-DIPHOSPHOCYTIDYL-2-C-METHYL-D-ERYTHRITOL KINASE, CHLOROPLASTIC"/>
    <property type="match status" value="1"/>
</dbReference>
<dbReference type="Pfam" id="PF00288">
    <property type="entry name" value="GHMP_kinases_N"/>
    <property type="match status" value="1"/>
</dbReference>
<dbReference type="PIRSF" id="PIRSF010376">
    <property type="entry name" value="IspE"/>
    <property type="match status" value="1"/>
</dbReference>
<dbReference type="SUPFAM" id="SSF55060">
    <property type="entry name" value="GHMP Kinase, C-terminal domain"/>
    <property type="match status" value="1"/>
</dbReference>
<dbReference type="SUPFAM" id="SSF54211">
    <property type="entry name" value="Ribosomal protein S5 domain 2-like"/>
    <property type="match status" value="1"/>
</dbReference>